<sequence>MHIMEGYLPPEWAAFWYVFAIPFLVYGALRVKRIIEEKPSMKSLIAVSAGFIFVLSALKLPSVTGSCSHPTGTGIAVVFFGPAVTALLSAIVLLYQALLLAHGGITTLGANTASMGVIGPFVGWIAFKLLKNVNFRVAVFAAAMLSDLVTYVVTSLQLALAFPSSAGVAGIIKSAATFMGIFAVTQVPLSIIEGVVAVMLVSYIFEVRSDVLEVVKA</sequence>
<proteinExistence type="inferred from homology"/>
<dbReference type="EMBL" id="AE000782">
    <property type="protein sequence ID" value="AAB90509.1"/>
    <property type="status" value="ALT_INIT"/>
    <property type="molecule type" value="Genomic_DNA"/>
</dbReference>
<dbReference type="PIR" id="H69340">
    <property type="entry name" value="H69340"/>
</dbReference>
<dbReference type="RefSeq" id="WP_010878231.1">
    <property type="nucleotide sequence ID" value="NC_000917.1"/>
</dbReference>
<dbReference type="SMR" id="O29530"/>
<dbReference type="STRING" id="224325.AF_0728"/>
<dbReference type="PaxDb" id="224325-AF_0728"/>
<dbReference type="EnsemblBacteria" id="AAB90509">
    <property type="protein sequence ID" value="AAB90509"/>
    <property type="gene ID" value="AF_0728"/>
</dbReference>
<dbReference type="GeneID" id="24794326"/>
<dbReference type="KEGG" id="afu:AF_0728"/>
<dbReference type="eggNOG" id="arCOG02248">
    <property type="taxonomic scope" value="Archaea"/>
</dbReference>
<dbReference type="HOGENOM" id="CLU_052508_3_0_2"/>
<dbReference type="OrthoDB" id="30946at2157"/>
<dbReference type="UniPathway" id="UPA00148"/>
<dbReference type="Proteomes" id="UP000002199">
    <property type="component" value="Chromosome"/>
</dbReference>
<dbReference type="GO" id="GO:0043190">
    <property type="term" value="C:ATP-binding cassette (ABC) transporter complex"/>
    <property type="evidence" value="ECO:0007669"/>
    <property type="project" value="InterPro"/>
</dbReference>
<dbReference type="GO" id="GO:0015087">
    <property type="term" value="F:cobalt ion transmembrane transporter activity"/>
    <property type="evidence" value="ECO:0007669"/>
    <property type="project" value="UniProtKB-UniRule"/>
</dbReference>
<dbReference type="GO" id="GO:0009236">
    <property type="term" value="P:cobalamin biosynthetic process"/>
    <property type="evidence" value="ECO:0007669"/>
    <property type="project" value="UniProtKB-UniRule"/>
</dbReference>
<dbReference type="FunFam" id="1.10.1760.20:FF:000001">
    <property type="entry name" value="Cobalt transport protein CbiM"/>
    <property type="match status" value="1"/>
</dbReference>
<dbReference type="Gene3D" id="1.10.1760.20">
    <property type="match status" value="1"/>
</dbReference>
<dbReference type="HAMAP" id="MF_01462">
    <property type="entry name" value="CbiM"/>
    <property type="match status" value="1"/>
</dbReference>
<dbReference type="InterPro" id="IPR018024">
    <property type="entry name" value="CbiM"/>
</dbReference>
<dbReference type="InterPro" id="IPR002751">
    <property type="entry name" value="CbiM/NikMN"/>
</dbReference>
<dbReference type="NCBIfam" id="TIGR00123">
    <property type="entry name" value="cbiM"/>
    <property type="match status" value="1"/>
</dbReference>
<dbReference type="NCBIfam" id="NF006184">
    <property type="entry name" value="PRK08319.1"/>
    <property type="match status" value="1"/>
</dbReference>
<dbReference type="PANTHER" id="PTHR43627">
    <property type="match status" value="1"/>
</dbReference>
<dbReference type="PANTHER" id="PTHR43627:SF1">
    <property type="entry name" value="COBALT TRANSPORT PROTEIN CBIM"/>
    <property type="match status" value="1"/>
</dbReference>
<dbReference type="Pfam" id="PF01891">
    <property type="entry name" value="CbiM"/>
    <property type="match status" value="1"/>
</dbReference>
<gene>
    <name evidence="1" type="primary">cbiM</name>
    <name type="ordered locus">AF_0728</name>
</gene>
<feature type="chain" id="PRO_0000411151" description="Putative cobalt transport protein CbiM">
    <location>
        <begin position="1"/>
        <end position="217"/>
    </location>
</feature>
<feature type="transmembrane region" description="Helical" evidence="1">
    <location>
        <begin position="8"/>
        <end position="28"/>
    </location>
</feature>
<feature type="transmembrane region" description="Helical" evidence="1">
    <location>
        <begin position="44"/>
        <end position="64"/>
    </location>
</feature>
<feature type="transmembrane region" description="Helical" evidence="1">
    <location>
        <begin position="74"/>
        <end position="94"/>
    </location>
</feature>
<feature type="transmembrane region" description="Helical" evidence="1">
    <location>
        <begin position="107"/>
        <end position="127"/>
    </location>
</feature>
<feature type="transmembrane region" description="Helical" evidence="1">
    <location>
        <begin position="139"/>
        <end position="161"/>
    </location>
</feature>
<feature type="transmembrane region" description="Helical" evidence="1">
    <location>
        <begin position="181"/>
        <end position="201"/>
    </location>
</feature>
<comment type="function">
    <text evidence="1">Part of the energy-coupling factor (ECF) transporter complex CbiMNOQ involved in cobalt import.</text>
</comment>
<comment type="pathway">
    <text evidence="1">Cofactor biosynthesis; adenosylcobalamin biosynthesis.</text>
</comment>
<comment type="subunit">
    <text evidence="1">Forms an energy-coupling factor (ECF) transporter complex composed of an ATP-binding protein (A component, CbiO), a transmembrane protein (T component, CbiQ) and 2 possible substrate-capture proteins (S components, CbiM and CbiN) of unknown stoichimetry.</text>
</comment>
<comment type="subcellular location">
    <subcellularLocation>
        <location evidence="1">Cell membrane</location>
        <topology evidence="1">Multi-pass membrane protein</topology>
    </subcellularLocation>
</comment>
<comment type="similarity">
    <text evidence="1">Belongs to the CbiM family.</text>
</comment>
<comment type="sequence caution" evidence="2">
    <conflict type="erroneous initiation">
        <sequence resource="EMBL-CDS" id="AAB90509"/>
    </conflict>
    <text>Extended N-terminus.</text>
</comment>
<keyword id="KW-1003">Cell membrane</keyword>
<keyword id="KW-0169">Cobalamin biosynthesis</keyword>
<keyword id="KW-0170">Cobalt</keyword>
<keyword id="KW-0171">Cobalt transport</keyword>
<keyword id="KW-0406">Ion transport</keyword>
<keyword id="KW-0472">Membrane</keyword>
<keyword id="KW-1185">Reference proteome</keyword>
<keyword id="KW-0812">Transmembrane</keyword>
<keyword id="KW-1133">Transmembrane helix</keyword>
<keyword id="KW-0813">Transport</keyword>
<protein>
    <recommendedName>
        <fullName evidence="1">Putative cobalt transport protein CbiM</fullName>
    </recommendedName>
    <alternativeName>
        <fullName evidence="1">Energy-coupling factor transporter probable substrate-capture protein CbiM</fullName>
        <shortName evidence="1">ECF transporter S component CbiM</shortName>
    </alternativeName>
</protein>
<evidence type="ECO:0000255" key="1">
    <source>
        <dbReference type="HAMAP-Rule" id="MF_01462"/>
    </source>
</evidence>
<evidence type="ECO:0000305" key="2"/>
<name>CBIM_ARCFU</name>
<accession>O29530</accession>
<reference key="1">
    <citation type="journal article" date="1997" name="Nature">
        <title>The complete genome sequence of the hyperthermophilic, sulphate-reducing archaeon Archaeoglobus fulgidus.</title>
        <authorList>
            <person name="Klenk H.-P."/>
            <person name="Clayton R.A."/>
            <person name="Tomb J.-F."/>
            <person name="White O."/>
            <person name="Nelson K.E."/>
            <person name="Ketchum K.A."/>
            <person name="Dodson R.J."/>
            <person name="Gwinn M.L."/>
            <person name="Hickey E.K."/>
            <person name="Peterson J.D."/>
            <person name="Richardson D.L."/>
            <person name="Kerlavage A.R."/>
            <person name="Graham D.E."/>
            <person name="Kyrpides N.C."/>
            <person name="Fleischmann R.D."/>
            <person name="Quackenbush J."/>
            <person name="Lee N.H."/>
            <person name="Sutton G.G."/>
            <person name="Gill S.R."/>
            <person name="Kirkness E.F."/>
            <person name="Dougherty B.A."/>
            <person name="McKenney K."/>
            <person name="Adams M.D."/>
            <person name="Loftus B.J."/>
            <person name="Peterson S.N."/>
            <person name="Reich C.I."/>
            <person name="McNeil L.K."/>
            <person name="Badger J.H."/>
            <person name="Glodek A."/>
            <person name="Zhou L."/>
            <person name="Overbeek R."/>
            <person name="Gocayne J.D."/>
            <person name="Weidman J.F."/>
            <person name="McDonald L.A."/>
            <person name="Utterback T.R."/>
            <person name="Cotton M.D."/>
            <person name="Spriggs T."/>
            <person name="Artiach P."/>
            <person name="Kaine B.P."/>
            <person name="Sykes S.M."/>
            <person name="Sadow P.W."/>
            <person name="D'Andrea K.P."/>
            <person name="Bowman C."/>
            <person name="Fujii C."/>
            <person name="Garland S.A."/>
            <person name="Mason T.M."/>
            <person name="Olsen G.J."/>
            <person name="Fraser C.M."/>
            <person name="Smith H.O."/>
            <person name="Woese C.R."/>
            <person name="Venter J.C."/>
        </authorList>
    </citation>
    <scope>NUCLEOTIDE SEQUENCE [LARGE SCALE GENOMIC DNA]</scope>
    <source>
        <strain>ATCC 49558 / DSM 4304 / JCM 9628 / NBRC 100126 / VC-16</strain>
    </source>
</reference>
<organism>
    <name type="scientific">Archaeoglobus fulgidus (strain ATCC 49558 / DSM 4304 / JCM 9628 / NBRC 100126 / VC-16)</name>
    <dbReference type="NCBI Taxonomy" id="224325"/>
    <lineage>
        <taxon>Archaea</taxon>
        <taxon>Methanobacteriati</taxon>
        <taxon>Methanobacteriota</taxon>
        <taxon>Archaeoglobi</taxon>
        <taxon>Archaeoglobales</taxon>
        <taxon>Archaeoglobaceae</taxon>
        <taxon>Archaeoglobus</taxon>
    </lineage>
</organism>